<gene>
    <name type="primary">Copz1</name>
    <name type="synonym">Copz</name>
</gene>
<reference key="1">
    <citation type="submission" date="2000-01" db="EMBL/GenBank/DDBJ databases">
        <title>Murine Copz1 gene encoding nonclathrin coat protein zeta-COP.</title>
        <authorList>
            <person name="Hahn Y."/>
            <person name="Chung J.H."/>
        </authorList>
    </citation>
    <scope>NUCLEOTIDE SEQUENCE [MRNA]</scope>
</reference>
<reference key="2">
    <citation type="journal article" date="2005" name="Science">
        <title>The transcriptional landscape of the mammalian genome.</title>
        <authorList>
            <person name="Carninci P."/>
            <person name="Kasukawa T."/>
            <person name="Katayama S."/>
            <person name="Gough J."/>
            <person name="Frith M.C."/>
            <person name="Maeda N."/>
            <person name="Oyama R."/>
            <person name="Ravasi T."/>
            <person name="Lenhard B."/>
            <person name="Wells C."/>
            <person name="Kodzius R."/>
            <person name="Shimokawa K."/>
            <person name="Bajic V.B."/>
            <person name="Brenner S.E."/>
            <person name="Batalov S."/>
            <person name="Forrest A.R."/>
            <person name="Zavolan M."/>
            <person name="Davis M.J."/>
            <person name="Wilming L.G."/>
            <person name="Aidinis V."/>
            <person name="Allen J.E."/>
            <person name="Ambesi-Impiombato A."/>
            <person name="Apweiler R."/>
            <person name="Aturaliya R.N."/>
            <person name="Bailey T.L."/>
            <person name="Bansal M."/>
            <person name="Baxter L."/>
            <person name="Beisel K.W."/>
            <person name="Bersano T."/>
            <person name="Bono H."/>
            <person name="Chalk A.M."/>
            <person name="Chiu K.P."/>
            <person name="Choudhary V."/>
            <person name="Christoffels A."/>
            <person name="Clutterbuck D.R."/>
            <person name="Crowe M.L."/>
            <person name="Dalla E."/>
            <person name="Dalrymple B.P."/>
            <person name="de Bono B."/>
            <person name="Della Gatta G."/>
            <person name="di Bernardo D."/>
            <person name="Down T."/>
            <person name="Engstrom P."/>
            <person name="Fagiolini M."/>
            <person name="Faulkner G."/>
            <person name="Fletcher C.F."/>
            <person name="Fukushima T."/>
            <person name="Furuno M."/>
            <person name="Futaki S."/>
            <person name="Gariboldi M."/>
            <person name="Georgii-Hemming P."/>
            <person name="Gingeras T.R."/>
            <person name="Gojobori T."/>
            <person name="Green R.E."/>
            <person name="Gustincich S."/>
            <person name="Harbers M."/>
            <person name="Hayashi Y."/>
            <person name="Hensch T.K."/>
            <person name="Hirokawa N."/>
            <person name="Hill D."/>
            <person name="Huminiecki L."/>
            <person name="Iacono M."/>
            <person name="Ikeo K."/>
            <person name="Iwama A."/>
            <person name="Ishikawa T."/>
            <person name="Jakt M."/>
            <person name="Kanapin A."/>
            <person name="Katoh M."/>
            <person name="Kawasawa Y."/>
            <person name="Kelso J."/>
            <person name="Kitamura H."/>
            <person name="Kitano H."/>
            <person name="Kollias G."/>
            <person name="Krishnan S.P."/>
            <person name="Kruger A."/>
            <person name="Kummerfeld S.K."/>
            <person name="Kurochkin I.V."/>
            <person name="Lareau L.F."/>
            <person name="Lazarevic D."/>
            <person name="Lipovich L."/>
            <person name="Liu J."/>
            <person name="Liuni S."/>
            <person name="McWilliam S."/>
            <person name="Madan Babu M."/>
            <person name="Madera M."/>
            <person name="Marchionni L."/>
            <person name="Matsuda H."/>
            <person name="Matsuzawa S."/>
            <person name="Miki H."/>
            <person name="Mignone F."/>
            <person name="Miyake S."/>
            <person name="Morris K."/>
            <person name="Mottagui-Tabar S."/>
            <person name="Mulder N."/>
            <person name="Nakano N."/>
            <person name="Nakauchi H."/>
            <person name="Ng P."/>
            <person name="Nilsson R."/>
            <person name="Nishiguchi S."/>
            <person name="Nishikawa S."/>
            <person name="Nori F."/>
            <person name="Ohara O."/>
            <person name="Okazaki Y."/>
            <person name="Orlando V."/>
            <person name="Pang K.C."/>
            <person name="Pavan W.J."/>
            <person name="Pavesi G."/>
            <person name="Pesole G."/>
            <person name="Petrovsky N."/>
            <person name="Piazza S."/>
            <person name="Reed J."/>
            <person name="Reid J.F."/>
            <person name="Ring B.Z."/>
            <person name="Ringwald M."/>
            <person name="Rost B."/>
            <person name="Ruan Y."/>
            <person name="Salzberg S.L."/>
            <person name="Sandelin A."/>
            <person name="Schneider C."/>
            <person name="Schoenbach C."/>
            <person name="Sekiguchi K."/>
            <person name="Semple C.A."/>
            <person name="Seno S."/>
            <person name="Sessa L."/>
            <person name="Sheng Y."/>
            <person name="Shibata Y."/>
            <person name="Shimada H."/>
            <person name="Shimada K."/>
            <person name="Silva D."/>
            <person name="Sinclair B."/>
            <person name="Sperling S."/>
            <person name="Stupka E."/>
            <person name="Sugiura K."/>
            <person name="Sultana R."/>
            <person name="Takenaka Y."/>
            <person name="Taki K."/>
            <person name="Tammoja K."/>
            <person name="Tan S.L."/>
            <person name="Tang S."/>
            <person name="Taylor M.S."/>
            <person name="Tegner J."/>
            <person name="Teichmann S.A."/>
            <person name="Ueda H.R."/>
            <person name="van Nimwegen E."/>
            <person name="Verardo R."/>
            <person name="Wei C.L."/>
            <person name="Yagi K."/>
            <person name="Yamanishi H."/>
            <person name="Zabarovsky E."/>
            <person name="Zhu S."/>
            <person name="Zimmer A."/>
            <person name="Hide W."/>
            <person name="Bult C."/>
            <person name="Grimmond S.M."/>
            <person name="Teasdale R.D."/>
            <person name="Liu E.T."/>
            <person name="Brusic V."/>
            <person name="Quackenbush J."/>
            <person name="Wahlestedt C."/>
            <person name="Mattick J.S."/>
            <person name="Hume D.A."/>
            <person name="Kai C."/>
            <person name="Sasaki D."/>
            <person name="Tomaru Y."/>
            <person name="Fukuda S."/>
            <person name="Kanamori-Katayama M."/>
            <person name="Suzuki M."/>
            <person name="Aoki J."/>
            <person name="Arakawa T."/>
            <person name="Iida J."/>
            <person name="Imamura K."/>
            <person name="Itoh M."/>
            <person name="Kato T."/>
            <person name="Kawaji H."/>
            <person name="Kawagashira N."/>
            <person name="Kawashima T."/>
            <person name="Kojima M."/>
            <person name="Kondo S."/>
            <person name="Konno H."/>
            <person name="Nakano K."/>
            <person name="Ninomiya N."/>
            <person name="Nishio T."/>
            <person name="Okada M."/>
            <person name="Plessy C."/>
            <person name="Shibata K."/>
            <person name="Shiraki T."/>
            <person name="Suzuki S."/>
            <person name="Tagami M."/>
            <person name="Waki K."/>
            <person name="Watahiki A."/>
            <person name="Okamura-Oho Y."/>
            <person name="Suzuki H."/>
            <person name="Kawai J."/>
            <person name="Hayashizaki Y."/>
        </authorList>
    </citation>
    <scope>NUCLEOTIDE SEQUENCE [LARGE SCALE MRNA]</scope>
    <source>
        <strain>C57BL/6J</strain>
    </source>
</reference>
<reference key="3">
    <citation type="journal article" date="2004" name="Genome Res.">
        <title>The status, quality, and expansion of the NIH full-length cDNA project: the Mammalian Gene Collection (MGC).</title>
        <authorList>
            <consortium name="The MGC Project Team"/>
        </authorList>
    </citation>
    <scope>NUCLEOTIDE SEQUENCE [LARGE SCALE MRNA]</scope>
    <source>
        <strain>C57BL/6J</strain>
        <tissue>Brain</tissue>
        <tissue>Embryo</tissue>
    </source>
</reference>
<reference key="4">
    <citation type="journal article" date="2010" name="Cell">
        <title>A tissue-specific atlas of mouse protein phosphorylation and expression.</title>
        <authorList>
            <person name="Huttlin E.L."/>
            <person name="Jedrychowski M.P."/>
            <person name="Elias J.E."/>
            <person name="Goswami T."/>
            <person name="Rad R."/>
            <person name="Beausoleil S.A."/>
            <person name="Villen J."/>
            <person name="Haas W."/>
            <person name="Sowa M.E."/>
            <person name="Gygi S.P."/>
        </authorList>
    </citation>
    <scope>IDENTIFICATION BY MASS SPECTROMETRY [LARGE SCALE ANALYSIS]</scope>
    <source>
        <tissue>Brain</tissue>
        <tissue>Brown adipose tissue</tissue>
        <tissue>Kidney</tissue>
        <tissue>Liver</tissue>
        <tissue>Lung</tissue>
        <tissue>Pancreas</tissue>
        <tissue>Spleen</tissue>
        <tissue>Testis</tissue>
    </source>
</reference>
<accession>P61924</accession>
<accession>Q9Y3C3</accession>
<protein>
    <recommendedName>
        <fullName>Coatomer subunit zeta-1</fullName>
    </recommendedName>
    <alternativeName>
        <fullName>Zeta-1-coat protein</fullName>
        <shortName>Zeta-1 COP</shortName>
    </alternativeName>
</protein>
<proteinExistence type="evidence at protein level"/>
<comment type="function">
    <text evidence="2">The coatomer is a cytosolic protein complex that binds to dilysine motifs and reversibly associates with Golgi non-clathrin-coated vesicles, which further mediate biosynthetic protein transport from the ER, via the Golgi up to the trans Golgi network. Coatomer complex is required for budding from Golgi membranes, and is essential for the retrograde Golgi-to-ER transport of dilysine-tagged proteins (By similarity). The zeta subunit may be involved in regulating the coat assembly and, hence, the rate of biosynthetic protein transport due to its association-dissociation properties with the coatomer complex (By similarity).</text>
</comment>
<comment type="subunit">
    <text evidence="1">Oligomeric complex that consists of at least the alpha, beta, beta', gamma, delta, epsilon and zeta subunits.</text>
</comment>
<comment type="subcellular location">
    <subcellularLocation>
        <location evidence="1">Cytoplasm</location>
    </subcellularLocation>
    <subcellularLocation>
        <location evidence="1">Golgi apparatus membrane</location>
        <topology evidence="1">Peripheral membrane protein</topology>
        <orientation evidence="1">Cytoplasmic side</orientation>
    </subcellularLocation>
    <subcellularLocation>
        <location evidence="1">Cytoplasmic vesicle</location>
        <location evidence="1">COPI-coated vesicle membrane</location>
        <topology evidence="1">Peripheral membrane protein</topology>
        <orientation evidence="1">Cytoplasmic side</orientation>
    </subcellularLocation>
    <text evidence="1">The coatomer is cytoplasmic or polymerized on the cytoplasmic side of the Golgi, as well as on the vesicles/buds originating from it.</text>
</comment>
<comment type="similarity">
    <text evidence="4">Belongs to the adaptor complexes small subunit family.</text>
</comment>
<feature type="chain" id="PRO_0000193826" description="Coatomer subunit zeta-1">
    <location>
        <begin position="1"/>
        <end position="177"/>
    </location>
</feature>
<feature type="modified residue" description="N-acetylmethionine" evidence="3">
    <location>
        <position position="1"/>
    </location>
</feature>
<organism>
    <name type="scientific">Mus musculus</name>
    <name type="common">Mouse</name>
    <dbReference type="NCBI Taxonomy" id="10090"/>
    <lineage>
        <taxon>Eukaryota</taxon>
        <taxon>Metazoa</taxon>
        <taxon>Chordata</taxon>
        <taxon>Craniata</taxon>
        <taxon>Vertebrata</taxon>
        <taxon>Euteleostomi</taxon>
        <taxon>Mammalia</taxon>
        <taxon>Eutheria</taxon>
        <taxon>Euarchontoglires</taxon>
        <taxon>Glires</taxon>
        <taxon>Rodentia</taxon>
        <taxon>Myomorpha</taxon>
        <taxon>Muroidea</taxon>
        <taxon>Muridae</taxon>
        <taxon>Murinae</taxon>
        <taxon>Mus</taxon>
        <taxon>Mus</taxon>
    </lineage>
</organism>
<evidence type="ECO:0000250" key="1"/>
<evidence type="ECO:0000250" key="2">
    <source>
        <dbReference type="UniProtKB" id="P53600"/>
    </source>
</evidence>
<evidence type="ECO:0000250" key="3">
    <source>
        <dbReference type="UniProtKB" id="P61923"/>
    </source>
</evidence>
<evidence type="ECO:0000305" key="4"/>
<sequence>MEALILEPSLYTVKAILILDNDGDRLFAKYYDDTYPSVKEQKAFEKNIFNKTHRTDSEIALLEGLTVVYKSSIDLYFYVIGSSYENELMLMAVLNCLFDSLSQMLRKNVEKRALLENMEGLFLAVDEIVDGGVILESDPQQVVHRVALRGEDVPLTEQTVSQVLQSAKEQIKWSLLR</sequence>
<keyword id="KW-0002">3D-structure</keyword>
<keyword id="KW-0007">Acetylation</keyword>
<keyword id="KW-0963">Cytoplasm</keyword>
<keyword id="KW-0968">Cytoplasmic vesicle</keyword>
<keyword id="KW-0931">ER-Golgi transport</keyword>
<keyword id="KW-0333">Golgi apparatus</keyword>
<keyword id="KW-0472">Membrane</keyword>
<keyword id="KW-0653">Protein transport</keyword>
<keyword id="KW-1185">Reference proteome</keyword>
<keyword id="KW-0813">Transport</keyword>
<name>COPZ1_MOUSE</name>
<dbReference type="EMBL" id="AB037370">
    <property type="protein sequence ID" value="BAA90303.1"/>
    <property type="molecule type" value="mRNA"/>
</dbReference>
<dbReference type="EMBL" id="AK003302">
    <property type="protein sequence ID" value="BAB22703.1"/>
    <property type="molecule type" value="mRNA"/>
</dbReference>
<dbReference type="EMBL" id="BC002246">
    <property type="status" value="NOT_ANNOTATED_CDS"/>
    <property type="molecule type" value="mRNA"/>
</dbReference>
<dbReference type="EMBL" id="BC058524">
    <property type="protein sequence ID" value="AAH58524.1"/>
    <property type="molecule type" value="mRNA"/>
</dbReference>
<dbReference type="EMBL" id="BC085314">
    <property type="protein sequence ID" value="AAH85314.1"/>
    <property type="molecule type" value="mRNA"/>
</dbReference>
<dbReference type="CCDS" id="CCDS27901.1"/>
<dbReference type="RefSeq" id="NP_062791.1">
    <property type="nucleotide sequence ID" value="NM_019817.2"/>
</dbReference>
<dbReference type="PDB" id="5A1U">
    <property type="method" value="EM"/>
    <property type="resolution" value="13.00 A"/>
    <property type="chains" value="F=1-177"/>
</dbReference>
<dbReference type="PDB" id="5A1V">
    <property type="method" value="EM"/>
    <property type="resolution" value="21.00 A"/>
    <property type="chains" value="F/N/W=1-177"/>
</dbReference>
<dbReference type="PDB" id="5A1W">
    <property type="method" value="EM"/>
    <property type="resolution" value="18.00 A"/>
    <property type="chains" value="F=1-177"/>
</dbReference>
<dbReference type="PDB" id="5A1X">
    <property type="method" value="EM"/>
    <property type="resolution" value="23.00 A"/>
    <property type="chains" value="F/N=1-177"/>
</dbReference>
<dbReference type="PDB" id="5A1Y">
    <property type="method" value="EM"/>
    <property type="resolution" value="21.00 A"/>
    <property type="chains" value="F/N/W=1-177"/>
</dbReference>
<dbReference type="PDB" id="5NZR">
    <property type="method" value="EM"/>
    <property type="resolution" value="9.20 A"/>
    <property type="chains" value="L/Z=1-177"/>
</dbReference>
<dbReference type="PDB" id="5NZS">
    <property type="method" value="EM"/>
    <property type="resolution" value="10.10 A"/>
    <property type="chains" value="L/Z=1-177"/>
</dbReference>
<dbReference type="PDB" id="5NZT">
    <property type="method" value="EM"/>
    <property type="resolution" value="17.00 A"/>
    <property type="chains" value="L/Z=1-177"/>
</dbReference>
<dbReference type="PDB" id="5NZU">
    <property type="method" value="EM"/>
    <property type="resolution" value="15.00 A"/>
    <property type="chains" value="L/Z=1-177"/>
</dbReference>
<dbReference type="PDB" id="5NZV">
    <property type="method" value="EM"/>
    <property type="resolution" value="17.30 A"/>
    <property type="chains" value="L/S/U/Z=1-177"/>
</dbReference>
<dbReference type="PDBsum" id="5A1U"/>
<dbReference type="PDBsum" id="5A1V"/>
<dbReference type="PDBsum" id="5A1W"/>
<dbReference type="PDBsum" id="5A1X"/>
<dbReference type="PDBsum" id="5A1Y"/>
<dbReference type="PDBsum" id="5NZR"/>
<dbReference type="PDBsum" id="5NZS"/>
<dbReference type="PDBsum" id="5NZT"/>
<dbReference type="PDBsum" id="5NZU"/>
<dbReference type="PDBsum" id="5NZV"/>
<dbReference type="BMRB" id="P61924"/>
<dbReference type="EMDB" id="EMD-3720"/>
<dbReference type="EMDB" id="EMD-3721"/>
<dbReference type="EMDB" id="EMD-3722"/>
<dbReference type="EMDB" id="EMD-3723"/>
<dbReference type="EMDB" id="EMD-3724"/>
<dbReference type="SMR" id="P61924"/>
<dbReference type="BioGRID" id="207987">
    <property type="interactions" value="14"/>
</dbReference>
<dbReference type="FunCoup" id="P61924">
    <property type="interactions" value="1870"/>
</dbReference>
<dbReference type="IntAct" id="P61924">
    <property type="interactions" value="2"/>
</dbReference>
<dbReference type="MINT" id="P61924"/>
<dbReference type="STRING" id="10090.ENSMUSP00000097738"/>
<dbReference type="iPTMnet" id="P61924"/>
<dbReference type="PhosphoSitePlus" id="P61924"/>
<dbReference type="SwissPalm" id="P61924"/>
<dbReference type="jPOST" id="P61924"/>
<dbReference type="PaxDb" id="10090-ENSMUSP00000097738"/>
<dbReference type="PeptideAtlas" id="P61924"/>
<dbReference type="ProteomicsDB" id="283792"/>
<dbReference type="Pumba" id="P61924"/>
<dbReference type="Antibodypedia" id="27430">
    <property type="antibodies" value="216 antibodies from 25 providers"/>
</dbReference>
<dbReference type="DNASU" id="56447"/>
<dbReference type="Ensembl" id="ENSMUST00000100162.5">
    <property type="protein sequence ID" value="ENSMUSP00000097738.4"/>
    <property type="gene ID" value="ENSMUSG00000060992.10"/>
</dbReference>
<dbReference type="GeneID" id="56447"/>
<dbReference type="KEGG" id="mmu:56447"/>
<dbReference type="UCSC" id="uc007xxv.1">
    <property type="organism name" value="mouse"/>
</dbReference>
<dbReference type="AGR" id="MGI:1929063"/>
<dbReference type="CTD" id="22818"/>
<dbReference type="MGI" id="MGI:1929063">
    <property type="gene designation" value="Copz1"/>
</dbReference>
<dbReference type="VEuPathDB" id="HostDB:ENSMUSG00000060992"/>
<dbReference type="eggNOG" id="KOG3343">
    <property type="taxonomic scope" value="Eukaryota"/>
</dbReference>
<dbReference type="GeneTree" id="ENSGT00390000004405"/>
<dbReference type="HOGENOM" id="CLU_086803_2_0_1"/>
<dbReference type="InParanoid" id="P61924"/>
<dbReference type="OMA" id="NELMLHS"/>
<dbReference type="OrthoDB" id="10249988at2759"/>
<dbReference type="PhylomeDB" id="P61924"/>
<dbReference type="TreeFam" id="TF300262"/>
<dbReference type="Reactome" id="R-MMU-6807878">
    <property type="pathway name" value="COPI-mediated anterograde transport"/>
</dbReference>
<dbReference type="Reactome" id="R-MMU-6811434">
    <property type="pathway name" value="COPI-dependent Golgi-to-ER retrograde traffic"/>
</dbReference>
<dbReference type="BioGRID-ORCS" id="56447">
    <property type="hits" value="25 hits in 79 CRISPR screens"/>
</dbReference>
<dbReference type="ChiTaRS" id="Copz1">
    <property type="organism name" value="mouse"/>
</dbReference>
<dbReference type="EvolutionaryTrace" id="P61924"/>
<dbReference type="PRO" id="PR:P61924"/>
<dbReference type="Proteomes" id="UP000000589">
    <property type="component" value="Chromosome 15"/>
</dbReference>
<dbReference type="RNAct" id="P61924">
    <property type="molecule type" value="protein"/>
</dbReference>
<dbReference type="Bgee" id="ENSMUSG00000060992">
    <property type="expression patterns" value="Expressed in yolk sac and 268 other cell types or tissues"/>
</dbReference>
<dbReference type="ExpressionAtlas" id="P61924">
    <property type="expression patterns" value="baseline and differential"/>
</dbReference>
<dbReference type="GO" id="GO:0030126">
    <property type="term" value="C:COPI vesicle coat"/>
    <property type="evidence" value="ECO:0000250"/>
    <property type="project" value="UniProtKB"/>
</dbReference>
<dbReference type="GO" id="GO:0000139">
    <property type="term" value="C:Golgi membrane"/>
    <property type="evidence" value="ECO:0007669"/>
    <property type="project" value="UniProtKB-SubCell"/>
</dbReference>
<dbReference type="GO" id="GO:0006891">
    <property type="term" value="P:intra-Golgi vesicle-mediated transport"/>
    <property type="evidence" value="ECO:0000250"/>
    <property type="project" value="UniProtKB"/>
</dbReference>
<dbReference type="GO" id="GO:0006886">
    <property type="term" value="P:intracellular protein transport"/>
    <property type="evidence" value="ECO:0007669"/>
    <property type="project" value="InterPro"/>
</dbReference>
<dbReference type="GO" id="GO:0006890">
    <property type="term" value="P:retrograde vesicle-mediated transport, Golgi to endoplasmic reticulum"/>
    <property type="evidence" value="ECO:0007669"/>
    <property type="project" value="InterPro"/>
</dbReference>
<dbReference type="CDD" id="cd14829">
    <property type="entry name" value="Zeta-COP"/>
    <property type="match status" value="1"/>
</dbReference>
<dbReference type="FunFam" id="3.30.450.60:FF:000008">
    <property type="entry name" value="Coatomer subunit zeta-1 isoform 1"/>
    <property type="match status" value="1"/>
</dbReference>
<dbReference type="Gene3D" id="3.30.450.60">
    <property type="match status" value="1"/>
</dbReference>
<dbReference type="InterPro" id="IPR022775">
    <property type="entry name" value="AP_mu_sigma_su"/>
</dbReference>
<dbReference type="InterPro" id="IPR000804">
    <property type="entry name" value="Clathrin_sm-chain_CS"/>
</dbReference>
<dbReference type="InterPro" id="IPR039652">
    <property type="entry name" value="Coatomer_zeta"/>
</dbReference>
<dbReference type="InterPro" id="IPR011012">
    <property type="entry name" value="Longin-like_dom_sf"/>
</dbReference>
<dbReference type="PANTHER" id="PTHR11043:SF2">
    <property type="entry name" value="COATOMER SUBUNIT ZETA-1"/>
    <property type="match status" value="1"/>
</dbReference>
<dbReference type="PANTHER" id="PTHR11043">
    <property type="entry name" value="ZETA-COAT PROTEIN"/>
    <property type="match status" value="1"/>
</dbReference>
<dbReference type="Pfam" id="PF01217">
    <property type="entry name" value="Clat_adaptor_s"/>
    <property type="match status" value="1"/>
</dbReference>
<dbReference type="SUPFAM" id="SSF64356">
    <property type="entry name" value="SNARE-like"/>
    <property type="match status" value="1"/>
</dbReference>
<dbReference type="PROSITE" id="PS00989">
    <property type="entry name" value="CLAT_ADAPTOR_S"/>
    <property type="match status" value="1"/>
</dbReference>